<sequence length="281" mass="30683">MDLILLLKAVILGVVEGLTEFLPISSTGHLILVGDLLDFNDDRGKAFEVIIQFGAILAVCWEFREKLIKVTSSFASSPNARRFVLNLFIASIPAMGLGFLFGKHIKAVLFSPIPVASAFIVGTLIIFWAERRQQNLVDVSSYIKSVDDLRPLDALKVGLAQCAALIPGTSRSGATIIGGMLFGLPRAVATEFSFFLAIPVIGGATAYELLKLWKAPVAFSGEFTLAIVVGFIAAFISAFVCVRWLIHYVAHHNFIPFAWYRIAFGILVLFTSYTGLIAWSH</sequence>
<name>UPPP_POLNS</name>
<proteinExistence type="inferred from homology"/>
<protein>
    <recommendedName>
        <fullName evidence="1">Undecaprenyl-diphosphatase</fullName>
        <ecNumber evidence="1">3.6.1.27</ecNumber>
    </recommendedName>
    <alternativeName>
        <fullName evidence="1">Bacitracin resistance protein</fullName>
    </alternativeName>
    <alternativeName>
        <fullName evidence="1">Undecaprenyl pyrophosphate phosphatase</fullName>
    </alternativeName>
</protein>
<keyword id="KW-0046">Antibiotic resistance</keyword>
<keyword id="KW-0997">Cell inner membrane</keyword>
<keyword id="KW-1003">Cell membrane</keyword>
<keyword id="KW-0133">Cell shape</keyword>
<keyword id="KW-0961">Cell wall biogenesis/degradation</keyword>
<keyword id="KW-0378">Hydrolase</keyword>
<keyword id="KW-0472">Membrane</keyword>
<keyword id="KW-0573">Peptidoglycan synthesis</keyword>
<keyword id="KW-0812">Transmembrane</keyword>
<keyword id="KW-1133">Transmembrane helix</keyword>
<feature type="chain" id="PRO_1000197388" description="Undecaprenyl-diphosphatase">
    <location>
        <begin position="1"/>
        <end position="281"/>
    </location>
</feature>
<feature type="transmembrane region" description="Helical" evidence="1">
    <location>
        <begin position="4"/>
        <end position="24"/>
    </location>
</feature>
<feature type="transmembrane region" description="Helical" evidence="1">
    <location>
        <begin position="46"/>
        <end position="63"/>
    </location>
</feature>
<feature type="transmembrane region" description="Helical" evidence="1">
    <location>
        <begin position="83"/>
        <end position="103"/>
    </location>
</feature>
<feature type="transmembrane region" description="Helical" evidence="1">
    <location>
        <begin position="108"/>
        <end position="128"/>
    </location>
</feature>
<feature type="transmembrane region" description="Helical" evidence="1">
    <location>
        <begin position="187"/>
        <end position="207"/>
    </location>
</feature>
<feature type="transmembrane region" description="Helical" evidence="1">
    <location>
        <begin position="222"/>
        <end position="242"/>
    </location>
</feature>
<feature type="transmembrane region" description="Helical" evidence="1">
    <location>
        <begin position="257"/>
        <end position="277"/>
    </location>
</feature>
<accession>B1XTA2</accession>
<gene>
    <name evidence="1" type="primary">uppP</name>
    <name type="ordered locus">Pnec_0285</name>
</gene>
<organism>
    <name type="scientific">Polynucleobacter necessarius subsp. necessarius (strain STIR1)</name>
    <dbReference type="NCBI Taxonomy" id="452638"/>
    <lineage>
        <taxon>Bacteria</taxon>
        <taxon>Pseudomonadati</taxon>
        <taxon>Pseudomonadota</taxon>
        <taxon>Betaproteobacteria</taxon>
        <taxon>Burkholderiales</taxon>
        <taxon>Burkholderiaceae</taxon>
        <taxon>Polynucleobacter</taxon>
    </lineage>
</organism>
<comment type="function">
    <text evidence="1">Catalyzes the dephosphorylation of undecaprenyl diphosphate (UPP). Confers resistance to bacitracin.</text>
</comment>
<comment type="catalytic activity">
    <reaction evidence="1">
        <text>di-trans,octa-cis-undecaprenyl diphosphate + H2O = di-trans,octa-cis-undecaprenyl phosphate + phosphate + H(+)</text>
        <dbReference type="Rhea" id="RHEA:28094"/>
        <dbReference type="ChEBI" id="CHEBI:15377"/>
        <dbReference type="ChEBI" id="CHEBI:15378"/>
        <dbReference type="ChEBI" id="CHEBI:43474"/>
        <dbReference type="ChEBI" id="CHEBI:58405"/>
        <dbReference type="ChEBI" id="CHEBI:60392"/>
        <dbReference type="EC" id="3.6.1.27"/>
    </reaction>
</comment>
<comment type="subcellular location">
    <subcellularLocation>
        <location evidence="1">Cell inner membrane</location>
        <topology evidence="1">Multi-pass membrane protein</topology>
    </subcellularLocation>
</comment>
<comment type="miscellaneous">
    <text>Bacitracin is thought to be involved in the inhibition of peptidoglycan synthesis by sequestering undecaprenyl diphosphate, thereby reducing the pool of lipid carrier available.</text>
</comment>
<comment type="similarity">
    <text evidence="1">Belongs to the UppP family.</text>
</comment>
<evidence type="ECO:0000255" key="1">
    <source>
        <dbReference type="HAMAP-Rule" id="MF_01006"/>
    </source>
</evidence>
<reference key="1">
    <citation type="journal article" date="2013" name="Proc. Natl. Acad. Sci. U.S.A.">
        <title>Polynucleobacter necessarius, a model for genome reduction in both free-living and symbiotic bacteria.</title>
        <authorList>
            <person name="Boscaro V."/>
            <person name="Felletti M."/>
            <person name="Vannini C."/>
            <person name="Ackerman M.S."/>
            <person name="Chain P.S."/>
            <person name="Malfatti S."/>
            <person name="Vergez L.M."/>
            <person name="Shin M."/>
            <person name="Doak T.G."/>
            <person name="Lynch M."/>
            <person name="Petroni G."/>
        </authorList>
    </citation>
    <scope>NUCLEOTIDE SEQUENCE [LARGE SCALE GENOMIC DNA]</scope>
    <source>
        <strain>STIR1</strain>
    </source>
</reference>
<dbReference type="EC" id="3.6.1.27" evidence="1"/>
<dbReference type="EMBL" id="CP001010">
    <property type="protein sequence ID" value="ACB43579.1"/>
    <property type="molecule type" value="Genomic_DNA"/>
</dbReference>
<dbReference type="SMR" id="B1XTA2"/>
<dbReference type="STRING" id="452638.Pnec_0285"/>
<dbReference type="KEGG" id="pne:Pnec_0285"/>
<dbReference type="eggNOG" id="COG1968">
    <property type="taxonomic scope" value="Bacteria"/>
</dbReference>
<dbReference type="HOGENOM" id="CLU_060296_2_0_4"/>
<dbReference type="OrthoDB" id="9808289at2"/>
<dbReference type="GO" id="GO:0005886">
    <property type="term" value="C:plasma membrane"/>
    <property type="evidence" value="ECO:0007669"/>
    <property type="project" value="UniProtKB-SubCell"/>
</dbReference>
<dbReference type="GO" id="GO:0050380">
    <property type="term" value="F:undecaprenyl-diphosphatase activity"/>
    <property type="evidence" value="ECO:0007669"/>
    <property type="project" value="UniProtKB-UniRule"/>
</dbReference>
<dbReference type="GO" id="GO:0071555">
    <property type="term" value="P:cell wall organization"/>
    <property type="evidence" value="ECO:0007669"/>
    <property type="project" value="UniProtKB-KW"/>
</dbReference>
<dbReference type="GO" id="GO:0009252">
    <property type="term" value="P:peptidoglycan biosynthetic process"/>
    <property type="evidence" value="ECO:0007669"/>
    <property type="project" value="UniProtKB-KW"/>
</dbReference>
<dbReference type="GO" id="GO:0008360">
    <property type="term" value="P:regulation of cell shape"/>
    <property type="evidence" value="ECO:0007669"/>
    <property type="project" value="UniProtKB-KW"/>
</dbReference>
<dbReference type="GO" id="GO:0046677">
    <property type="term" value="P:response to antibiotic"/>
    <property type="evidence" value="ECO:0007669"/>
    <property type="project" value="UniProtKB-UniRule"/>
</dbReference>
<dbReference type="HAMAP" id="MF_01006">
    <property type="entry name" value="Undec_diphosphatase"/>
    <property type="match status" value="1"/>
</dbReference>
<dbReference type="InterPro" id="IPR003824">
    <property type="entry name" value="UppP"/>
</dbReference>
<dbReference type="NCBIfam" id="NF001389">
    <property type="entry name" value="PRK00281.1-2"/>
    <property type="match status" value="1"/>
</dbReference>
<dbReference type="NCBIfam" id="NF001390">
    <property type="entry name" value="PRK00281.1-4"/>
    <property type="match status" value="1"/>
</dbReference>
<dbReference type="NCBIfam" id="TIGR00753">
    <property type="entry name" value="undec_PP_bacA"/>
    <property type="match status" value="1"/>
</dbReference>
<dbReference type="PANTHER" id="PTHR30622">
    <property type="entry name" value="UNDECAPRENYL-DIPHOSPHATASE"/>
    <property type="match status" value="1"/>
</dbReference>
<dbReference type="PANTHER" id="PTHR30622:SF3">
    <property type="entry name" value="UNDECAPRENYL-DIPHOSPHATASE"/>
    <property type="match status" value="1"/>
</dbReference>
<dbReference type="Pfam" id="PF02673">
    <property type="entry name" value="BacA"/>
    <property type="match status" value="1"/>
</dbReference>